<proteinExistence type="evidence at protein level"/>
<feature type="signal peptide" evidence="2">
    <location>
        <begin position="1"/>
        <end position="17"/>
    </location>
</feature>
<feature type="chain" id="PRO_0000423791" description="Envelope glycoprotein N" evidence="2">
    <location>
        <begin position="18"/>
        <end position="110"/>
    </location>
</feature>
<feature type="topological domain" description="Virion surface" evidence="2">
    <location>
        <begin position="18"/>
        <end position="80"/>
    </location>
</feature>
<feature type="transmembrane region" description="Helical" evidence="2">
    <location>
        <begin position="81"/>
        <end position="101"/>
    </location>
</feature>
<feature type="topological domain" description="Intravirion" evidence="2">
    <location>
        <begin position="102"/>
        <end position="110"/>
    </location>
</feature>
<feature type="region of interest" description="Disordered" evidence="3">
    <location>
        <begin position="28"/>
        <end position="51"/>
    </location>
</feature>
<feature type="compositionally biased region" description="Polar residues" evidence="3">
    <location>
        <begin position="28"/>
        <end position="41"/>
    </location>
</feature>
<feature type="disulfide bond" description="Interchain (with gM)" evidence="2">
    <location>
        <position position="63"/>
    </location>
</feature>
<sequence length="110" mass="11466">MTASTVALALFVASILGHCWVTANSTGVASSTERSSPSTAGLSARPSPGPTSVTTPGFYDVACSADSFSPSLSSFSSVWALINALLVVVATFFYLVYLCFFKFVDEVVHA</sequence>
<comment type="function">
    <text evidence="2 4">Envelope glycoprotein necessary for proper maturation of gM and modulation of its membrane fusion activity. Also plays a critical role in virion morphogenesis.</text>
</comment>
<comment type="subunit">
    <text evidence="2 4">Interacts (via N-terminus) with gM (via N-terminus). The gM-gN heterodimer forms the gCII complex.</text>
</comment>
<comment type="interaction">
    <interactant intactId="EBI-8841815">
        <id>F5HFQ0</id>
    </interactant>
    <interactant intactId="EBI-7931480">
        <id>P88927</id>
    </interactant>
    <organismsDiffer>true</organismsDiffer>
    <experiments>2</experiments>
</comment>
<comment type="subcellular location">
    <subcellularLocation>
        <location evidence="2 4">Virion membrane</location>
        <topology evidence="2 4">Single-pass type I membrane protein</topology>
    </subcellularLocation>
    <subcellularLocation>
        <location evidence="2">Host membrane</location>
        <topology evidence="2 4">Single-pass type I membrane protein</topology>
    </subcellularLocation>
    <subcellularLocation>
        <location evidence="2">Host Golgi apparatus</location>
        <location evidence="2">Host trans-Golgi network</location>
    </subcellularLocation>
    <text evidence="2">When coexpressed with gM, localizes in the host trans-Golgi network.</text>
</comment>
<comment type="PTM">
    <text evidence="1 4">O-glycosylated (By similarity). Contains alpha 2,6-sialic acid residues (By similarity). N-glycosylated.</text>
</comment>
<comment type="similarity">
    <text evidence="2">Belongs to the herpesviridae glycoprotein N family.</text>
</comment>
<organismHost>
    <name type="scientific">Homo sapiens</name>
    <name type="common">Human</name>
    <dbReference type="NCBI Taxonomy" id="9606"/>
</organismHost>
<gene>
    <name evidence="2" type="primary">gN</name>
    <name type="synonym">ORF53</name>
</gene>
<protein>
    <recommendedName>
        <fullName evidence="2">Envelope glycoprotein N</fullName>
    </recommendedName>
</protein>
<reference key="1">
    <citation type="journal article" date="1999" name="J. Virol.">
        <title>Identification of a spliced gene from Kaposi's sarcoma-associated herpesvirus encoding a protein with similarities to latent membrane proteins 1 and 2A of Epstein-Barr virus.</title>
        <authorList>
            <person name="Glenn M."/>
            <person name="Rainbow L."/>
            <person name="Aurade F."/>
            <person name="Davison A."/>
            <person name="Schulz T.F."/>
        </authorList>
    </citation>
    <scope>NUCLEOTIDE SEQUENCE [LARGE SCALE GENOMIC DNA]</scope>
</reference>
<reference key="2">
    <citation type="journal article" date="2006" name="J. Gen. Virol.">
        <title>Kaposi's sarcoma-associated herpesvirus immune modulation: an overview.</title>
        <authorList>
            <person name="Rezaee S.A.R."/>
            <person name="Cunningham C."/>
            <person name="Davison A.J."/>
            <person name="Blackbourn D.J."/>
        </authorList>
    </citation>
    <scope>NUCLEOTIDE SEQUENCE [LARGE SCALE GENOMIC DNA]</scope>
</reference>
<reference key="3">
    <citation type="journal article" date="2003" name="J. Gen. Virol.">
        <title>Glycoproteins M and N of human herpesvirus 8 form a complex and inhibit cell fusion.</title>
        <authorList>
            <person name="Koyano S."/>
            <person name="Mar E.C."/>
            <person name="Stamey F.R."/>
            <person name="Inoue N."/>
        </authorList>
    </citation>
    <scope>FUNCTION</scope>
    <scope>GLYCOSYLATION</scope>
    <scope>SUBCELLULAR LOCATION</scope>
    <scope>INTERACTION WITH GM</scope>
</reference>
<organism>
    <name type="scientific">Human herpesvirus 8 type P (isolate GK18)</name>
    <name type="common">HHV-8</name>
    <name type="synonym">Kaposi's sarcoma-associated herpesvirus</name>
    <dbReference type="NCBI Taxonomy" id="868565"/>
    <lineage>
        <taxon>Viruses</taxon>
        <taxon>Duplodnaviria</taxon>
        <taxon>Heunggongvirae</taxon>
        <taxon>Peploviricota</taxon>
        <taxon>Herviviricetes</taxon>
        <taxon>Herpesvirales</taxon>
        <taxon>Orthoherpesviridae</taxon>
        <taxon>Gammaherpesvirinae</taxon>
        <taxon>Rhadinovirus</taxon>
        <taxon>Rhadinovirus humangamma8</taxon>
        <taxon>Human herpesvirus 8</taxon>
    </lineage>
</organism>
<name>GN_HHV8P</name>
<evidence type="ECO:0000250" key="1"/>
<evidence type="ECO:0000255" key="2">
    <source>
        <dbReference type="HAMAP-Rule" id="MF_04037"/>
    </source>
</evidence>
<evidence type="ECO:0000256" key="3">
    <source>
        <dbReference type="SAM" id="MobiDB-lite"/>
    </source>
</evidence>
<evidence type="ECO:0000269" key="4">
    <source>
    </source>
</evidence>
<keyword id="KW-1015">Disulfide bond</keyword>
<keyword id="KW-1040">Host Golgi apparatus</keyword>
<keyword id="KW-1043">Host membrane</keyword>
<keyword id="KW-0472">Membrane</keyword>
<keyword id="KW-1185">Reference proteome</keyword>
<keyword id="KW-0732">Signal</keyword>
<keyword id="KW-0812">Transmembrane</keyword>
<keyword id="KW-1133">Transmembrane helix</keyword>
<keyword id="KW-0261">Viral envelope protein</keyword>
<keyword id="KW-0946">Virion</keyword>
<accession>F5HFQ0</accession>
<dbReference type="EMBL" id="AF148805">
    <property type="protein sequence ID" value="ABD28904.1"/>
    <property type="molecule type" value="Genomic_DNA"/>
</dbReference>
<dbReference type="RefSeq" id="YP_001129406.1">
    <property type="nucleotide sequence ID" value="NC_009333.1"/>
</dbReference>
<dbReference type="SMR" id="F5HFQ0"/>
<dbReference type="IntAct" id="F5HFQ0">
    <property type="interactions" value="1"/>
</dbReference>
<dbReference type="DNASU" id="4961468"/>
<dbReference type="GeneID" id="4961468"/>
<dbReference type="KEGG" id="vg:4961468"/>
<dbReference type="Proteomes" id="UP000000942">
    <property type="component" value="Segment"/>
</dbReference>
<dbReference type="GO" id="GO:0044177">
    <property type="term" value="C:host cell Golgi apparatus"/>
    <property type="evidence" value="ECO:0007669"/>
    <property type="project" value="UniProtKB-SubCell"/>
</dbReference>
<dbReference type="GO" id="GO:0033644">
    <property type="term" value="C:host cell membrane"/>
    <property type="evidence" value="ECO:0007669"/>
    <property type="project" value="UniProtKB-SubCell"/>
</dbReference>
<dbReference type="GO" id="GO:0016020">
    <property type="term" value="C:membrane"/>
    <property type="evidence" value="ECO:0007669"/>
    <property type="project" value="UniProtKB-KW"/>
</dbReference>
<dbReference type="GO" id="GO:0019031">
    <property type="term" value="C:viral envelope"/>
    <property type="evidence" value="ECO:0007669"/>
    <property type="project" value="UniProtKB-KW"/>
</dbReference>
<dbReference type="GO" id="GO:0055036">
    <property type="term" value="C:virion membrane"/>
    <property type="evidence" value="ECO:0007669"/>
    <property type="project" value="UniProtKB-SubCell"/>
</dbReference>
<dbReference type="HAMAP" id="MF_04037">
    <property type="entry name" value="HSV_GN"/>
    <property type="match status" value="1"/>
</dbReference>
<dbReference type="InterPro" id="IPR005211">
    <property type="entry name" value="Herpes_glycoprotein_N_domain"/>
</dbReference>
<dbReference type="InterPro" id="IPR034707">
    <property type="entry name" value="HSV_GN"/>
</dbReference>
<dbReference type="Pfam" id="PF03554">
    <property type="entry name" value="Herpes_UL73"/>
    <property type="match status" value="1"/>
</dbReference>